<name>ANR54_RAT</name>
<comment type="function">
    <text evidence="1">Plays an important role in regulating intracellular signaling events associated with erythroid terminal differentiation.</text>
</comment>
<comment type="subunit">
    <text evidence="1">Interacts (via ankyrin repeat region) with LYN (via SH3-domain) in an activation-independent status of LYN. Forms a multiprotein complex with LYN and HCLS1 (By similarity). Interacts with TSN2, VAV1, DBNL and LASP1 (By similarity).</text>
</comment>
<comment type="subcellular location">
    <subcellularLocation>
        <location evidence="1">Nucleus</location>
    </subcellularLocation>
    <subcellularLocation>
        <location evidence="1">Cytoplasm</location>
    </subcellularLocation>
    <subcellularLocation>
        <location evidence="1">Midbody</location>
    </subcellularLocation>
    <text evidence="1">Shuttles between nucleus and cytoplasm during the cell cycle. EPO stimulation induces nuclear accumulation (By similarity).</text>
</comment>
<reference key="1">
    <citation type="journal article" date="2004" name="Genome Res.">
        <title>The status, quality, and expansion of the NIH full-length cDNA project: the Mammalian Gene Collection (MGC).</title>
        <authorList>
            <consortium name="The MGC Project Team"/>
        </authorList>
    </citation>
    <scope>NUCLEOTIDE SEQUENCE [LARGE SCALE MRNA]</scope>
    <source>
        <tissue>Brain</tissue>
    </source>
</reference>
<dbReference type="EMBL" id="BC093616">
    <property type="protein sequence ID" value="AAH93616.1"/>
    <property type="molecule type" value="mRNA"/>
</dbReference>
<dbReference type="RefSeq" id="NP_001020456.1">
    <property type="nucleotide sequence ID" value="NM_001025285.2"/>
</dbReference>
<dbReference type="SMR" id="Q566C8"/>
<dbReference type="FunCoup" id="Q566C8">
    <property type="interactions" value="2163"/>
</dbReference>
<dbReference type="STRING" id="10116.ENSRNOP00000014413"/>
<dbReference type="iPTMnet" id="Q566C8"/>
<dbReference type="PhosphoSitePlus" id="Q566C8"/>
<dbReference type="PaxDb" id="10116-ENSRNOP00000014413"/>
<dbReference type="GeneID" id="362957"/>
<dbReference type="KEGG" id="rno:362957"/>
<dbReference type="UCSC" id="RGD:1309552">
    <property type="organism name" value="rat"/>
</dbReference>
<dbReference type="AGR" id="RGD:1309552"/>
<dbReference type="CTD" id="129138"/>
<dbReference type="RGD" id="1309552">
    <property type="gene designation" value="Ankrd54"/>
</dbReference>
<dbReference type="eggNOG" id="KOG0504">
    <property type="taxonomic scope" value="Eukaryota"/>
</dbReference>
<dbReference type="HOGENOM" id="CLU_072816_0_0_1"/>
<dbReference type="InParanoid" id="Q566C8"/>
<dbReference type="PRO" id="PR:Q566C8"/>
<dbReference type="Proteomes" id="UP000002494">
    <property type="component" value="Unplaced"/>
</dbReference>
<dbReference type="GO" id="GO:0005737">
    <property type="term" value="C:cytoplasm"/>
    <property type="evidence" value="ECO:0000250"/>
    <property type="project" value="UniProtKB"/>
</dbReference>
<dbReference type="GO" id="GO:0030496">
    <property type="term" value="C:midbody"/>
    <property type="evidence" value="ECO:0000250"/>
    <property type="project" value="UniProtKB"/>
</dbReference>
<dbReference type="GO" id="GO:0005634">
    <property type="term" value="C:nucleus"/>
    <property type="evidence" value="ECO:0000250"/>
    <property type="project" value="UniProtKB"/>
</dbReference>
<dbReference type="GO" id="GO:0019887">
    <property type="term" value="F:protein kinase regulator activity"/>
    <property type="evidence" value="ECO:0000266"/>
    <property type="project" value="RGD"/>
</dbReference>
<dbReference type="GO" id="GO:0044877">
    <property type="term" value="F:protein-containing complex binding"/>
    <property type="evidence" value="ECO:0000266"/>
    <property type="project" value="RGD"/>
</dbReference>
<dbReference type="GO" id="GO:0006913">
    <property type="term" value="P:nucleocytoplasmic transport"/>
    <property type="evidence" value="ECO:0000266"/>
    <property type="project" value="RGD"/>
</dbReference>
<dbReference type="GO" id="GO:0045648">
    <property type="term" value="P:positive regulation of erythrocyte differentiation"/>
    <property type="evidence" value="ECO:0000250"/>
    <property type="project" value="UniProtKB"/>
</dbReference>
<dbReference type="GO" id="GO:1902531">
    <property type="term" value="P:regulation of intracellular signal transduction"/>
    <property type="evidence" value="ECO:0000250"/>
    <property type="project" value="UniProtKB"/>
</dbReference>
<dbReference type="FunFam" id="1.25.40.20:FF:000108">
    <property type="entry name" value="Ankyrin repeat domain-containing protein 54"/>
    <property type="match status" value="1"/>
</dbReference>
<dbReference type="FunFam" id="1.25.40.20:FF:000162">
    <property type="entry name" value="Ankyrin repeat domain-containing protein 54"/>
    <property type="match status" value="1"/>
</dbReference>
<dbReference type="Gene3D" id="1.25.40.20">
    <property type="entry name" value="Ankyrin repeat-containing domain"/>
    <property type="match status" value="2"/>
</dbReference>
<dbReference type="InterPro" id="IPR002110">
    <property type="entry name" value="Ankyrin_rpt"/>
</dbReference>
<dbReference type="InterPro" id="IPR036770">
    <property type="entry name" value="Ankyrin_rpt-contain_sf"/>
</dbReference>
<dbReference type="PANTHER" id="PTHR24197:SF44">
    <property type="entry name" value="ANKYRIN REPEAT DOMAIN-CONTAINING PROTEIN 54"/>
    <property type="match status" value="1"/>
</dbReference>
<dbReference type="PANTHER" id="PTHR24197">
    <property type="entry name" value="ANKYRIN REPEAT DOMAIN-CONTAINING PROTEIN 61"/>
    <property type="match status" value="1"/>
</dbReference>
<dbReference type="Pfam" id="PF00023">
    <property type="entry name" value="Ank"/>
    <property type="match status" value="1"/>
</dbReference>
<dbReference type="Pfam" id="PF12796">
    <property type="entry name" value="Ank_2"/>
    <property type="match status" value="1"/>
</dbReference>
<dbReference type="SMART" id="SM00248">
    <property type="entry name" value="ANK"/>
    <property type="match status" value="4"/>
</dbReference>
<dbReference type="SUPFAM" id="SSF48403">
    <property type="entry name" value="Ankyrin repeat"/>
    <property type="match status" value="1"/>
</dbReference>
<dbReference type="PROSITE" id="PS50297">
    <property type="entry name" value="ANK_REP_REGION"/>
    <property type="match status" value="1"/>
</dbReference>
<dbReference type="PROSITE" id="PS50088">
    <property type="entry name" value="ANK_REPEAT"/>
    <property type="match status" value="2"/>
</dbReference>
<organism>
    <name type="scientific">Rattus norvegicus</name>
    <name type="common">Rat</name>
    <dbReference type="NCBI Taxonomy" id="10116"/>
    <lineage>
        <taxon>Eukaryota</taxon>
        <taxon>Metazoa</taxon>
        <taxon>Chordata</taxon>
        <taxon>Craniata</taxon>
        <taxon>Vertebrata</taxon>
        <taxon>Euteleostomi</taxon>
        <taxon>Mammalia</taxon>
        <taxon>Eutheria</taxon>
        <taxon>Euarchontoglires</taxon>
        <taxon>Glires</taxon>
        <taxon>Rodentia</taxon>
        <taxon>Myomorpha</taxon>
        <taxon>Muroidea</taxon>
        <taxon>Muridae</taxon>
        <taxon>Murinae</taxon>
        <taxon>Rattus</taxon>
    </lineage>
</organism>
<protein>
    <recommendedName>
        <fullName>Ankyrin repeat domain-containing protein 54</fullName>
    </recommendedName>
</protein>
<sequence>MAATGGGAEDESRSGRSSSEGECAVAPEPLAEAGGLFSFADLGAALGSGAGLPGRAVGRAQSPLRYLQVLWQQDVEPRDELRCKIPAGRLRRAARPHRRLGPTGKEVHALKRLRDSANANDIETVQQLLEDGADPCAADDKGRTALHFASCNGNDQIVQLLLDHGADPNQQDGLGNTPLHLAACTNHVPVITTLLRGGARVDALDRAGRTPLHLAKSKLNILQEGHSQCLEAVRLEVKQIIHMLREYLERLGRHEQRERLDDLCTRLQMTSTKEQVDEVTDLLASFTSLSLQMQSMEKR</sequence>
<proteinExistence type="evidence at transcript level"/>
<gene>
    <name type="primary">Ankrd54</name>
</gene>
<evidence type="ECO:0000250" key="1"/>
<evidence type="ECO:0000250" key="2">
    <source>
        <dbReference type="UniProtKB" id="Q6NXT1"/>
    </source>
</evidence>
<evidence type="ECO:0000256" key="3">
    <source>
        <dbReference type="SAM" id="MobiDB-lite"/>
    </source>
</evidence>
<keyword id="KW-0007">Acetylation</keyword>
<keyword id="KW-0040">ANK repeat</keyword>
<keyword id="KW-0963">Cytoplasm</keyword>
<keyword id="KW-0539">Nucleus</keyword>
<keyword id="KW-0597">Phosphoprotein</keyword>
<keyword id="KW-1185">Reference proteome</keyword>
<keyword id="KW-0677">Repeat</keyword>
<feature type="initiator methionine" description="Removed" evidence="2">
    <location>
        <position position="1"/>
    </location>
</feature>
<feature type="chain" id="PRO_0000274495" description="Ankyrin repeat domain-containing protein 54">
    <location>
        <begin position="2"/>
        <end position="299"/>
    </location>
</feature>
<feature type="repeat" description="ANK 1">
    <location>
        <begin position="108"/>
        <end position="137"/>
    </location>
</feature>
<feature type="repeat" description="ANK 2">
    <location>
        <begin position="141"/>
        <end position="170"/>
    </location>
</feature>
<feature type="repeat" description="ANK 3">
    <location>
        <begin position="174"/>
        <end position="203"/>
    </location>
</feature>
<feature type="repeat" description="ANK 4">
    <location>
        <begin position="207"/>
        <end position="239"/>
    </location>
</feature>
<feature type="region of interest" description="Disordered" evidence="3">
    <location>
        <begin position="1"/>
        <end position="27"/>
    </location>
</feature>
<feature type="region of interest" description="LYN-binding" evidence="1">
    <location>
        <begin position="140"/>
        <end position="240"/>
    </location>
</feature>
<feature type="short sequence motif" description="Nuclear localization signal (NLS)" evidence="1">
    <location>
        <begin position="98"/>
        <end position="116"/>
    </location>
</feature>
<feature type="short sequence motif" description="Nuclear export signal (NES)" evidence="1">
    <location>
        <begin position="282"/>
        <end position="292"/>
    </location>
</feature>
<feature type="modified residue" description="N-acetylalanine" evidence="2">
    <location>
        <position position="2"/>
    </location>
</feature>
<feature type="modified residue" description="Phosphoserine" evidence="2">
    <location>
        <position position="62"/>
    </location>
</feature>
<accession>Q566C8</accession>